<comment type="function">
    <text evidence="1">Activates KDO (a required 8-carbon sugar) for incorporation into bacterial lipopolysaccharide in Gram-negative bacteria.</text>
</comment>
<comment type="catalytic activity">
    <reaction evidence="1">
        <text>3-deoxy-alpha-D-manno-oct-2-ulosonate + CTP = CMP-3-deoxy-beta-D-manno-octulosonate + diphosphate</text>
        <dbReference type="Rhea" id="RHEA:23448"/>
        <dbReference type="ChEBI" id="CHEBI:33019"/>
        <dbReference type="ChEBI" id="CHEBI:37563"/>
        <dbReference type="ChEBI" id="CHEBI:85986"/>
        <dbReference type="ChEBI" id="CHEBI:85987"/>
        <dbReference type="EC" id="2.7.7.38"/>
    </reaction>
</comment>
<comment type="pathway">
    <text evidence="1">Nucleotide-sugar biosynthesis; CMP-3-deoxy-D-manno-octulosonate biosynthesis; CMP-3-deoxy-D-manno-octulosonate from 3-deoxy-D-manno-octulosonate and CTP: step 1/1.</text>
</comment>
<comment type="pathway">
    <text evidence="1">Bacterial outer membrane biogenesis; lipopolysaccharide biosynthesis.</text>
</comment>
<comment type="subcellular location">
    <subcellularLocation>
        <location evidence="1">Cytoplasm</location>
    </subcellularLocation>
</comment>
<comment type="similarity">
    <text evidence="1">Belongs to the KdsB family.</text>
</comment>
<evidence type="ECO:0000255" key="1">
    <source>
        <dbReference type="HAMAP-Rule" id="MF_00057"/>
    </source>
</evidence>
<name>KDSB_BURM1</name>
<gene>
    <name evidence="1" type="primary">kdsB</name>
    <name type="ordered locus">Bmul_0749</name>
    <name type="ordered locus">BMULJ_02511</name>
</gene>
<feature type="chain" id="PRO_0000370031" description="3-deoxy-manno-octulosonate cytidylyltransferase">
    <location>
        <begin position="1"/>
        <end position="263"/>
    </location>
</feature>
<keyword id="KW-0963">Cytoplasm</keyword>
<keyword id="KW-0448">Lipopolysaccharide biosynthesis</keyword>
<keyword id="KW-0548">Nucleotidyltransferase</keyword>
<keyword id="KW-1185">Reference proteome</keyword>
<keyword id="KW-0808">Transferase</keyword>
<sequence length="263" mass="28338">MTHPQPFIAVIPARLASTRLPNKPLADLGGKPMVVRVAERAREAGAQQVLIASDAQSVLDAAREHGFDAVLTRADHPSGTDRLAEVAAACGWQDDTVVVNVQGDEPLIDPVLVRDVASHLAAHPACAIATAAHPIHDAADVFNPNVVKVALDAQSVALYFSRAPIPWSRDAYQPHWPDVAAMPAPAAPVYRHIGLYAYRARFLRTYPSLAQAPIEQAEQLEQLRALWHGERIAVLVTERAPAAGVDTPADLARVQALFRPDSK</sequence>
<protein>
    <recommendedName>
        <fullName evidence="1">3-deoxy-manno-octulosonate cytidylyltransferase</fullName>
        <ecNumber evidence="1">2.7.7.38</ecNumber>
    </recommendedName>
    <alternativeName>
        <fullName evidence="1">CMP-2-keto-3-deoxyoctulosonic acid synthase</fullName>
        <shortName evidence="1">CKS</shortName>
        <shortName evidence="1">CMP-KDO synthase</shortName>
    </alternativeName>
</protein>
<reference key="1">
    <citation type="submission" date="2007-10" db="EMBL/GenBank/DDBJ databases">
        <title>Complete sequence of chromosome 1 of Burkholderia multivorans ATCC 17616.</title>
        <authorList>
            <person name="Copeland A."/>
            <person name="Lucas S."/>
            <person name="Lapidus A."/>
            <person name="Barry K."/>
            <person name="Glavina del Rio T."/>
            <person name="Dalin E."/>
            <person name="Tice H."/>
            <person name="Pitluck S."/>
            <person name="Chain P."/>
            <person name="Malfatti S."/>
            <person name="Shin M."/>
            <person name="Vergez L."/>
            <person name="Schmutz J."/>
            <person name="Larimer F."/>
            <person name="Land M."/>
            <person name="Hauser L."/>
            <person name="Kyrpides N."/>
            <person name="Kim E."/>
            <person name="Tiedje J."/>
            <person name="Richardson P."/>
        </authorList>
    </citation>
    <scope>NUCLEOTIDE SEQUENCE [LARGE SCALE GENOMIC DNA]</scope>
    <source>
        <strain>ATCC 17616 / 249</strain>
    </source>
</reference>
<reference key="2">
    <citation type="submission" date="2007-04" db="EMBL/GenBank/DDBJ databases">
        <title>Complete genome sequence of Burkholderia multivorans ATCC 17616.</title>
        <authorList>
            <person name="Ohtsubo Y."/>
            <person name="Yamashita A."/>
            <person name="Kurokawa K."/>
            <person name="Takami H."/>
            <person name="Yuhara S."/>
            <person name="Nishiyama E."/>
            <person name="Endo R."/>
            <person name="Miyazaki R."/>
            <person name="Ono A."/>
            <person name="Yano K."/>
            <person name="Ito M."/>
            <person name="Sota M."/>
            <person name="Yuji N."/>
            <person name="Hattori M."/>
            <person name="Tsuda M."/>
        </authorList>
    </citation>
    <scope>NUCLEOTIDE SEQUENCE [LARGE SCALE GENOMIC DNA]</scope>
    <source>
        <strain>ATCC 17616 / 249</strain>
    </source>
</reference>
<proteinExistence type="inferred from homology"/>
<accession>A9AGK2</accession>
<organism>
    <name type="scientific">Burkholderia multivorans (strain ATCC 17616 / 249)</name>
    <dbReference type="NCBI Taxonomy" id="395019"/>
    <lineage>
        <taxon>Bacteria</taxon>
        <taxon>Pseudomonadati</taxon>
        <taxon>Pseudomonadota</taxon>
        <taxon>Betaproteobacteria</taxon>
        <taxon>Burkholderiales</taxon>
        <taxon>Burkholderiaceae</taxon>
        <taxon>Burkholderia</taxon>
        <taxon>Burkholderia cepacia complex</taxon>
    </lineage>
</organism>
<dbReference type="EC" id="2.7.7.38" evidence="1"/>
<dbReference type="EMBL" id="CP000868">
    <property type="protein sequence ID" value="ABX14444.1"/>
    <property type="molecule type" value="Genomic_DNA"/>
</dbReference>
<dbReference type="EMBL" id="AP009385">
    <property type="protein sequence ID" value="BAG44402.1"/>
    <property type="molecule type" value="Genomic_DNA"/>
</dbReference>
<dbReference type="RefSeq" id="WP_012212839.1">
    <property type="nucleotide sequence ID" value="NC_010084.1"/>
</dbReference>
<dbReference type="SMR" id="A9AGK2"/>
<dbReference type="STRING" id="395019.BMULJ_02511"/>
<dbReference type="KEGG" id="bmj:BMULJ_02511"/>
<dbReference type="KEGG" id="bmu:Bmul_0749"/>
<dbReference type="eggNOG" id="COG1212">
    <property type="taxonomic scope" value="Bacteria"/>
</dbReference>
<dbReference type="HOGENOM" id="CLU_065038_1_0_4"/>
<dbReference type="UniPathway" id="UPA00030"/>
<dbReference type="UniPathway" id="UPA00358">
    <property type="reaction ID" value="UER00476"/>
</dbReference>
<dbReference type="Proteomes" id="UP000008815">
    <property type="component" value="Chromosome 1"/>
</dbReference>
<dbReference type="GO" id="GO:0005829">
    <property type="term" value="C:cytosol"/>
    <property type="evidence" value="ECO:0007669"/>
    <property type="project" value="TreeGrafter"/>
</dbReference>
<dbReference type="GO" id="GO:0008690">
    <property type="term" value="F:3-deoxy-manno-octulosonate cytidylyltransferase activity"/>
    <property type="evidence" value="ECO:0007669"/>
    <property type="project" value="UniProtKB-UniRule"/>
</dbReference>
<dbReference type="GO" id="GO:0033468">
    <property type="term" value="P:CMP-keto-3-deoxy-D-manno-octulosonic acid biosynthetic process"/>
    <property type="evidence" value="ECO:0007669"/>
    <property type="project" value="UniProtKB-UniRule"/>
</dbReference>
<dbReference type="GO" id="GO:0009103">
    <property type="term" value="P:lipopolysaccharide biosynthetic process"/>
    <property type="evidence" value="ECO:0007669"/>
    <property type="project" value="UniProtKB-UniRule"/>
</dbReference>
<dbReference type="CDD" id="cd02517">
    <property type="entry name" value="CMP-KDO-Synthetase"/>
    <property type="match status" value="1"/>
</dbReference>
<dbReference type="FunFam" id="3.90.550.10:FF:000011">
    <property type="entry name" value="3-deoxy-manno-octulosonate cytidylyltransferase"/>
    <property type="match status" value="1"/>
</dbReference>
<dbReference type="Gene3D" id="3.90.550.10">
    <property type="entry name" value="Spore Coat Polysaccharide Biosynthesis Protein SpsA, Chain A"/>
    <property type="match status" value="1"/>
</dbReference>
<dbReference type="HAMAP" id="MF_00057">
    <property type="entry name" value="KdsB"/>
    <property type="match status" value="1"/>
</dbReference>
<dbReference type="InterPro" id="IPR003329">
    <property type="entry name" value="Cytidylyl_trans"/>
</dbReference>
<dbReference type="InterPro" id="IPR004528">
    <property type="entry name" value="KdsB"/>
</dbReference>
<dbReference type="InterPro" id="IPR029044">
    <property type="entry name" value="Nucleotide-diphossugar_trans"/>
</dbReference>
<dbReference type="NCBIfam" id="TIGR00466">
    <property type="entry name" value="kdsB"/>
    <property type="match status" value="1"/>
</dbReference>
<dbReference type="NCBIfam" id="NF003952">
    <property type="entry name" value="PRK05450.1-5"/>
    <property type="match status" value="1"/>
</dbReference>
<dbReference type="NCBIfam" id="NF009905">
    <property type="entry name" value="PRK13368.1"/>
    <property type="match status" value="1"/>
</dbReference>
<dbReference type="PANTHER" id="PTHR42866">
    <property type="entry name" value="3-DEOXY-MANNO-OCTULOSONATE CYTIDYLYLTRANSFERASE"/>
    <property type="match status" value="1"/>
</dbReference>
<dbReference type="PANTHER" id="PTHR42866:SF2">
    <property type="entry name" value="3-DEOXY-MANNO-OCTULOSONATE CYTIDYLYLTRANSFERASE, MITOCHONDRIAL"/>
    <property type="match status" value="1"/>
</dbReference>
<dbReference type="Pfam" id="PF02348">
    <property type="entry name" value="CTP_transf_3"/>
    <property type="match status" value="1"/>
</dbReference>
<dbReference type="SUPFAM" id="SSF53448">
    <property type="entry name" value="Nucleotide-diphospho-sugar transferases"/>
    <property type="match status" value="1"/>
</dbReference>